<protein>
    <recommendedName>
        <fullName evidence="1">Valine--tRNA ligase</fullName>
        <ecNumber evidence="1">6.1.1.9</ecNumber>
    </recommendedName>
    <alternativeName>
        <fullName evidence="1">Valyl-tRNA synthetase</fullName>
        <shortName evidence="1">ValRS</shortName>
    </alternativeName>
</protein>
<name>SYV_EHRCJ</name>
<keyword id="KW-0030">Aminoacyl-tRNA synthetase</keyword>
<keyword id="KW-0067">ATP-binding</keyword>
<keyword id="KW-0963">Cytoplasm</keyword>
<keyword id="KW-0436">Ligase</keyword>
<keyword id="KW-0547">Nucleotide-binding</keyword>
<keyword id="KW-0648">Protein biosynthesis</keyword>
<gene>
    <name evidence="1" type="primary">valS</name>
    <name type="ordered locus">Ecaj_0088</name>
</gene>
<feature type="chain" id="PRO_0000224608" description="Valine--tRNA ligase">
    <location>
        <begin position="1"/>
        <end position="802"/>
    </location>
</feature>
<feature type="short sequence motif" description="'HIGH' region">
    <location>
        <begin position="45"/>
        <end position="55"/>
    </location>
</feature>
<feature type="short sequence motif" description="'KMSKS' region">
    <location>
        <begin position="524"/>
        <end position="528"/>
    </location>
</feature>
<feature type="binding site" evidence="1">
    <location>
        <position position="527"/>
    </location>
    <ligand>
        <name>ATP</name>
        <dbReference type="ChEBI" id="CHEBI:30616"/>
    </ligand>
</feature>
<dbReference type="EC" id="6.1.1.9" evidence="1"/>
<dbReference type="EMBL" id="CP000107">
    <property type="protein sequence ID" value="AAZ68139.1"/>
    <property type="molecule type" value="Genomic_DNA"/>
</dbReference>
<dbReference type="RefSeq" id="WP_011304217.1">
    <property type="nucleotide sequence ID" value="NC_007354.1"/>
</dbReference>
<dbReference type="SMR" id="Q3YT16"/>
<dbReference type="FunCoup" id="Q3YT16">
    <property type="interactions" value="315"/>
</dbReference>
<dbReference type="STRING" id="269484.Ecaj_0088"/>
<dbReference type="KEGG" id="ecn:Ecaj_0088"/>
<dbReference type="eggNOG" id="COG0525">
    <property type="taxonomic scope" value="Bacteria"/>
</dbReference>
<dbReference type="HOGENOM" id="CLU_001493_0_2_5"/>
<dbReference type="InParanoid" id="Q3YT16"/>
<dbReference type="Proteomes" id="UP000000435">
    <property type="component" value="Chromosome"/>
</dbReference>
<dbReference type="GO" id="GO:0005829">
    <property type="term" value="C:cytosol"/>
    <property type="evidence" value="ECO:0007669"/>
    <property type="project" value="TreeGrafter"/>
</dbReference>
<dbReference type="GO" id="GO:0002161">
    <property type="term" value="F:aminoacyl-tRNA deacylase activity"/>
    <property type="evidence" value="ECO:0007669"/>
    <property type="project" value="InterPro"/>
</dbReference>
<dbReference type="GO" id="GO:0005524">
    <property type="term" value="F:ATP binding"/>
    <property type="evidence" value="ECO:0007669"/>
    <property type="project" value="UniProtKB-UniRule"/>
</dbReference>
<dbReference type="GO" id="GO:0004832">
    <property type="term" value="F:valine-tRNA ligase activity"/>
    <property type="evidence" value="ECO:0007669"/>
    <property type="project" value="UniProtKB-UniRule"/>
</dbReference>
<dbReference type="GO" id="GO:0006438">
    <property type="term" value="P:valyl-tRNA aminoacylation"/>
    <property type="evidence" value="ECO:0007669"/>
    <property type="project" value="UniProtKB-UniRule"/>
</dbReference>
<dbReference type="CDD" id="cd07962">
    <property type="entry name" value="Anticodon_Ia_Val"/>
    <property type="match status" value="1"/>
</dbReference>
<dbReference type="FunFam" id="3.40.50.620:FF:000192">
    <property type="entry name" value="Valine--tRNA ligase"/>
    <property type="match status" value="1"/>
</dbReference>
<dbReference type="Gene3D" id="3.40.50.620">
    <property type="entry name" value="HUPs"/>
    <property type="match status" value="2"/>
</dbReference>
<dbReference type="Gene3D" id="1.10.730.10">
    <property type="entry name" value="Isoleucyl-tRNA Synthetase, Domain 1"/>
    <property type="match status" value="1"/>
</dbReference>
<dbReference type="HAMAP" id="MF_02005">
    <property type="entry name" value="Val_tRNA_synth_type2"/>
    <property type="match status" value="1"/>
</dbReference>
<dbReference type="InterPro" id="IPR001412">
    <property type="entry name" value="aa-tRNA-synth_I_CS"/>
</dbReference>
<dbReference type="InterPro" id="IPR002300">
    <property type="entry name" value="aa-tRNA-synth_Ia"/>
</dbReference>
<dbReference type="InterPro" id="IPR033705">
    <property type="entry name" value="Anticodon_Ia_Val"/>
</dbReference>
<dbReference type="InterPro" id="IPR013155">
    <property type="entry name" value="M/V/L/I-tRNA-synth_anticd-bd"/>
</dbReference>
<dbReference type="InterPro" id="IPR014729">
    <property type="entry name" value="Rossmann-like_a/b/a_fold"/>
</dbReference>
<dbReference type="InterPro" id="IPR009080">
    <property type="entry name" value="tRNAsynth_Ia_anticodon-bd"/>
</dbReference>
<dbReference type="InterPro" id="IPR009008">
    <property type="entry name" value="Val/Leu/Ile-tRNA-synth_edit"/>
</dbReference>
<dbReference type="InterPro" id="IPR022874">
    <property type="entry name" value="Valine-tRNA_ligase_type_2"/>
</dbReference>
<dbReference type="InterPro" id="IPR002303">
    <property type="entry name" value="Valyl-tRNA_ligase"/>
</dbReference>
<dbReference type="NCBIfam" id="NF009687">
    <property type="entry name" value="PRK13208.1"/>
    <property type="match status" value="1"/>
</dbReference>
<dbReference type="NCBIfam" id="TIGR00422">
    <property type="entry name" value="valS"/>
    <property type="match status" value="1"/>
</dbReference>
<dbReference type="PANTHER" id="PTHR11946:SF93">
    <property type="entry name" value="VALINE--TRNA LIGASE, CHLOROPLASTIC_MITOCHONDRIAL 2"/>
    <property type="match status" value="1"/>
</dbReference>
<dbReference type="PANTHER" id="PTHR11946">
    <property type="entry name" value="VALYL-TRNA SYNTHETASES"/>
    <property type="match status" value="1"/>
</dbReference>
<dbReference type="Pfam" id="PF08264">
    <property type="entry name" value="Anticodon_1"/>
    <property type="match status" value="1"/>
</dbReference>
<dbReference type="Pfam" id="PF00133">
    <property type="entry name" value="tRNA-synt_1"/>
    <property type="match status" value="1"/>
</dbReference>
<dbReference type="PRINTS" id="PR00986">
    <property type="entry name" value="TRNASYNTHVAL"/>
</dbReference>
<dbReference type="SUPFAM" id="SSF47323">
    <property type="entry name" value="Anticodon-binding domain of a subclass of class I aminoacyl-tRNA synthetases"/>
    <property type="match status" value="1"/>
</dbReference>
<dbReference type="SUPFAM" id="SSF52374">
    <property type="entry name" value="Nucleotidylyl transferase"/>
    <property type="match status" value="1"/>
</dbReference>
<dbReference type="SUPFAM" id="SSF50677">
    <property type="entry name" value="ValRS/IleRS/LeuRS editing domain"/>
    <property type="match status" value="1"/>
</dbReference>
<dbReference type="PROSITE" id="PS00178">
    <property type="entry name" value="AA_TRNA_LIGASE_I"/>
    <property type="match status" value="1"/>
</dbReference>
<organism>
    <name type="scientific">Ehrlichia canis (strain Jake)</name>
    <dbReference type="NCBI Taxonomy" id="269484"/>
    <lineage>
        <taxon>Bacteria</taxon>
        <taxon>Pseudomonadati</taxon>
        <taxon>Pseudomonadota</taxon>
        <taxon>Alphaproteobacteria</taxon>
        <taxon>Rickettsiales</taxon>
        <taxon>Anaplasmataceae</taxon>
        <taxon>Ehrlichia</taxon>
    </lineage>
</organism>
<evidence type="ECO:0000255" key="1">
    <source>
        <dbReference type="HAMAP-Rule" id="MF_02005"/>
    </source>
</evidence>
<reference key="1">
    <citation type="journal article" date="2006" name="J. Bacteriol.">
        <title>The genome of the obligately intracellular bacterium Ehrlichia canis reveals themes of complex membrane structure and immune evasion strategies.</title>
        <authorList>
            <person name="Mavromatis K."/>
            <person name="Doyle C.K."/>
            <person name="Lykidis A."/>
            <person name="Ivanova N."/>
            <person name="Francino M.P."/>
            <person name="Chain P."/>
            <person name="Shin M."/>
            <person name="Malfatti S."/>
            <person name="Larimer F."/>
            <person name="Copeland A."/>
            <person name="Detter J.C."/>
            <person name="Land M."/>
            <person name="Richardson P.M."/>
            <person name="Yu X.J."/>
            <person name="Walker D.H."/>
            <person name="McBride J.W."/>
            <person name="Kyrpides N.C."/>
        </authorList>
    </citation>
    <scope>NUCLEOTIDE SEQUENCE [LARGE SCALE GENOMIC DNA]</scope>
    <source>
        <strain>Jake</strain>
    </source>
</reference>
<proteinExistence type="inferred from homology"/>
<accession>Q3YT16</accession>
<comment type="function">
    <text evidence="1">Catalyzes the attachment of valine to tRNA(Val). As ValRS can inadvertently accommodate and process structurally similar amino acids such as threonine, to avoid such errors, it has a 'posttransfer' editing activity that hydrolyzes mischarged Thr-tRNA(Val) in a tRNA-dependent manner.</text>
</comment>
<comment type="catalytic activity">
    <reaction evidence="1">
        <text>tRNA(Val) + L-valine + ATP = L-valyl-tRNA(Val) + AMP + diphosphate</text>
        <dbReference type="Rhea" id="RHEA:10704"/>
        <dbReference type="Rhea" id="RHEA-COMP:9672"/>
        <dbReference type="Rhea" id="RHEA-COMP:9708"/>
        <dbReference type="ChEBI" id="CHEBI:30616"/>
        <dbReference type="ChEBI" id="CHEBI:33019"/>
        <dbReference type="ChEBI" id="CHEBI:57762"/>
        <dbReference type="ChEBI" id="CHEBI:78442"/>
        <dbReference type="ChEBI" id="CHEBI:78537"/>
        <dbReference type="ChEBI" id="CHEBI:456215"/>
        <dbReference type="EC" id="6.1.1.9"/>
    </reaction>
</comment>
<comment type="subunit">
    <text evidence="1">Monomer.</text>
</comment>
<comment type="subcellular location">
    <subcellularLocation>
        <location evidence="1">Cytoplasm</location>
    </subcellularLocation>
</comment>
<comment type="domain">
    <text evidence="1">ValRS has two distinct active sites: one for aminoacylation and one for editing. The misactivated threonine is translocated from the active site to the editing site.</text>
</comment>
<comment type="similarity">
    <text evidence="1">Belongs to the class-I aminoacyl-tRNA synthetase family. ValS type 2 subfamily.</text>
</comment>
<sequence>MQSIFNNKYQFKNIETKYNTLWDTTKLYKWKNSGTNQFVIDTPPPTISGQLHIGHVFSYCHTDFIARYQRMLGKDVFYPIGFDDNGLPTERLVEKTKKIRATDISRKEFKTICTQVSHEFRIQFKQLFQSIGISYDWDLEYHTISKDIQKISQTSFINLYNKGKLYRKLQPIFWDCIDKTAIARAEVEENELSSFMNTIAFSTEAGKAINIATTRPELMPACVAVFFNPSDIRYQDLLGQNAIVPIFGNKVKILSDDQVKIDKGTGLVMCCTFGDEMDVYWWNKHNLDTKIIISKSGTIDHLNTLQGQDVCKQLHGLSITEARALIIEILERNNLLIQKQEITHNVKCAERSGAPIEILLSHQWFIKVVDIKHELLKQVQKINWHPQSMRKQIEIWIEGLNWDWCISRQRYFGVPFPVWYSKDGKIILPDINKLPIDPTNDLPEGYQDTEIEVETDVMDTWATSSLSTQFHNISATPADLRAQSHEIIRSWAFYTILQAYYHNNDIPWKNIMISGWCLAEDKTKMSKSKGNVLTPNKLLDEYGADVVRYWTANSKLGADTTFSNEILKLGKRFTTKLWNASKFVSMFIDQYSEPDLQYITETMDKWILSKLYKVIVKATESFNSFEYCIALDCIESFFWKDFCDNYLELSKKRAYGELISKQEHLSAVNTLSFVLRELLKMLAPFMPYVTEEIYRTLYSSNNSIHSHNTWPAADVNLYNESDELLGETFIEILNQVRKVKASAQLSVKYKINKLIINKHFPVSLENDLKAVCNADCIVYDNRQNDNKEQLLVSVEFENVQIT</sequence>